<proteinExistence type="inferred from homology"/>
<dbReference type="EC" id="1.16.-.-" evidence="1"/>
<dbReference type="EMBL" id="FM180568">
    <property type="protein sequence ID" value="CAS08312.1"/>
    <property type="molecule type" value="Genomic_DNA"/>
</dbReference>
<dbReference type="RefSeq" id="WP_000100800.1">
    <property type="nucleotide sequence ID" value="NC_011601.1"/>
</dbReference>
<dbReference type="SMR" id="B7UM08"/>
<dbReference type="GeneID" id="93776616"/>
<dbReference type="KEGG" id="ecg:E2348C_0764"/>
<dbReference type="HOGENOM" id="CLU_098183_1_2_6"/>
<dbReference type="Proteomes" id="UP000008205">
    <property type="component" value="Chromosome"/>
</dbReference>
<dbReference type="GO" id="GO:0005737">
    <property type="term" value="C:cytoplasm"/>
    <property type="evidence" value="ECO:0007669"/>
    <property type="project" value="UniProtKB-UniRule"/>
</dbReference>
<dbReference type="GO" id="GO:0009295">
    <property type="term" value="C:nucleoid"/>
    <property type="evidence" value="ECO:0007669"/>
    <property type="project" value="UniProtKB-SubCell"/>
</dbReference>
<dbReference type="GO" id="GO:0003677">
    <property type="term" value="F:DNA binding"/>
    <property type="evidence" value="ECO:0007669"/>
    <property type="project" value="UniProtKB-UniRule"/>
</dbReference>
<dbReference type="GO" id="GO:0008199">
    <property type="term" value="F:ferric iron binding"/>
    <property type="evidence" value="ECO:0007669"/>
    <property type="project" value="UniProtKB-UniRule"/>
</dbReference>
<dbReference type="GO" id="GO:0016722">
    <property type="term" value="F:oxidoreductase activity, acting on metal ions"/>
    <property type="evidence" value="ECO:0007669"/>
    <property type="project" value="InterPro"/>
</dbReference>
<dbReference type="GO" id="GO:0030261">
    <property type="term" value="P:chromosome condensation"/>
    <property type="evidence" value="ECO:0007669"/>
    <property type="project" value="UniProtKB-KW"/>
</dbReference>
<dbReference type="GO" id="GO:0006879">
    <property type="term" value="P:intracellular iron ion homeostasis"/>
    <property type="evidence" value="ECO:0007669"/>
    <property type="project" value="UniProtKB-KW"/>
</dbReference>
<dbReference type="CDD" id="cd01043">
    <property type="entry name" value="DPS"/>
    <property type="match status" value="1"/>
</dbReference>
<dbReference type="FunFam" id="1.20.1260.10:FF:000003">
    <property type="entry name" value="DNA protection during starvation protein"/>
    <property type="match status" value="1"/>
</dbReference>
<dbReference type="Gene3D" id="1.20.1260.10">
    <property type="match status" value="1"/>
</dbReference>
<dbReference type="HAMAP" id="MF_01441">
    <property type="entry name" value="Dps"/>
    <property type="match status" value="1"/>
</dbReference>
<dbReference type="InterPro" id="IPR002177">
    <property type="entry name" value="DPS_DNA-bd"/>
</dbReference>
<dbReference type="InterPro" id="IPR023188">
    <property type="entry name" value="DPS_DNA-bd_CS"/>
</dbReference>
<dbReference type="InterPro" id="IPR023067">
    <property type="entry name" value="Dps_gammaproteobac"/>
</dbReference>
<dbReference type="InterPro" id="IPR012347">
    <property type="entry name" value="Ferritin-like"/>
</dbReference>
<dbReference type="InterPro" id="IPR009078">
    <property type="entry name" value="Ferritin-like_SF"/>
</dbReference>
<dbReference type="InterPro" id="IPR008331">
    <property type="entry name" value="Ferritin_DPS_dom"/>
</dbReference>
<dbReference type="NCBIfam" id="NF006975">
    <property type="entry name" value="PRK09448.1"/>
    <property type="match status" value="1"/>
</dbReference>
<dbReference type="PANTHER" id="PTHR42932:SF3">
    <property type="entry name" value="DNA PROTECTION DURING STARVATION PROTEIN"/>
    <property type="match status" value="1"/>
</dbReference>
<dbReference type="PANTHER" id="PTHR42932">
    <property type="entry name" value="GENERAL STRESS PROTEIN 20U"/>
    <property type="match status" value="1"/>
</dbReference>
<dbReference type="Pfam" id="PF00210">
    <property type="entry name" value="Ferritin"/>
    <property type="match status" value="1"/>
</dbReference>
<dbReference type="PIRSF" id="PIRSF005900">
    <property type="entry name" value="Dps"/>
    <property type="match status" value="1"/>
</dbReference>
<dbReference type="PRINTS" id="PR01346">
    <property type="entry name" value="HELNAPAPROT"/>
</dbReference>
<dbReference type="SUPFAM" id="SSF47240">
    <property type="entry name" value="Ferritin-like"/>
    <property type="match status" value="1"/>
</dbReference>
<dbReference type="PROSITE" id="PS00818">
    <property type="entry name" value="DPS_1"/>
    <property type="match status" value="1"/>
</dbReference>
<dbReference type="PROSITE" id="PS00819">
    <property type="entry name" value="DPS_2"/>
    <property type="match status" value="1"/>
</dbReference>
<organism>
    <name type="scientific">Escherichia coli O127:H6 (strain E2348/69 / EPEC)</name>
    <dbReference type="NCBI Taxonomy" id="574521"/>
    <lineage>
        <taxon>Bacteria</taxon>
        <taxon>Pseudomonadati</taxon>
        <taxon>Pseudomonadota</taxon>
        <taxon>Gammaproteobacteria</taxon>
        <taxon>Enterobacterales</taxon>
        <taxon>Enterobacteriaceae</taxon>
        <taxon>Escherichia</taxon>
    </lineage>
</organism>
<evidence type="ECO:0000255" key="1">
    <source>
        <dbReference type="HAMAP-Rule" id="MF_01441"/>
    </source>
</evidence>
<keyword id="KW-0963">Cytoplasm</keyword>
<keyword id="KW-0226">DNA condensation</keyword>
<keyword id="KW-0238">DNA-binding</keyword>
<keyword id="KW-0408">Iron</keyword>
<keyword id="KW-0409">Iron storage</keyword>
<keyword id="KW-0479">Metal-binding</keyword>
<keyword id="KW-0560">Oxidoreductase</keyword>
<keyword id="KW-1185">Reference proteome</keyword>
<reference key="1">
    <citation type="journal article" date="2009" name="J. Bacteriol.">
        <title>Complete genome sequence and comparative genome analysis of enteropathogenic Escherichia coli O127:H6 strain E2348/69.</title>
        <authorList>
            <person name="Iguchi A."/>
            <person name="Thomson N.R."/>
            <person name="Ogura Y."/>
            <person name="Saunders D."/>
            <person name="Ooka T."/>
            <person name="Henderson I.R."/>
            <person name="Harris D."/>
            <person name="Asadulghani M."/>
            <person name="Kurokawa K."/>
            <person name="Dean P."/>
            <person name="Kenny B."/>
            <person name="Quail M.A."/>
            <person name="Thurston S."/>
            <person name="Dougan G."/>
            <person name="Hayashi T."/>
            <person name="Parkhill J."/>
            <person name="Frankel G."/>
        </authorList>
    </citation>
    <scope>NUCLEOTIDE SEQUENCE [LARGE SCALE GENOMIC DNA]</scope>
    <source>
        <strain>E2348/69 / EPEC</strain>
    </source>
</reference>
<accession>B7UM08</accession>
<comment type="function">
    <text evidence="1">During stationary phase, binds the chromosome non-specifically, forming a highly ordered and stable dps-DNA co-crystal within which chromosomal DNA is condensed and protected from diverse damages. It protects DNA from oxidative damage by sequestering intracellular Fe(2+) ion and storing it in the form of Fe(3+) oxyhydroxide mineral, which can be released after reduction. One hydrogen peroxide oxidizes two Fe(2+) ions, which prevents hydroxyl radical production by the Fenton reaction. Dps also protects the cell from UV and gamma irradiation, iron and copper toxicity, thermal stress and acid and base shocks. Also shows a weak catalase activity.</text>
</comment>
<comment type="catalytic activity">
    <reaction evidence="1">
        <text>2 Fe(2+) + H2O2 + 2 H(+) = 2 Fe(3+) + 2 H2O</text>
        <dbReference type="Rhea" id="RHEA:48712"/>
        <dbReference type="ChEBI" id="CHEBI:15377"/>
        <dbReference type="ChEBI" id="CHEBI:15378"/>
        <dbReference type="ChEBI" id="CHEBI:16240"/>
        <dbReference type="ChEBI" id="CHEBI:29033"/>
        <dbReference type="ChEBI" id="CHEBI:29034"/>
    </reaction>
</comment>
<comment type="subunit">
    <text evidence="1">Homododecamer. The 12 subunits form a hollow sphere into which the mineral iron core of up to 500 Fe(3+) can be deposited.</text>
</comment>
<comment type="subcellular location">
    <subcellularLocation>
        <location evidence="1">Cytoplasm</location>
        <location evidence="1">Nucleoid</location>
    </subcellularLocation>
</comment>
<comment type="similarity">
    <text evidence="1">Belongs to the Dps family.</text>
</comment>
<sequence length="167" mass="18695">MSTAKLVKSKATNLLYTRNDVSDSEKKATVELLNRQVIQFIDLSLITKQAHWNMRGANFIAVHEMLDGFRTALIDHLDTMAERAVQLGGVALGTTQVINSKTPLKSYPLDIHNVQDHLKELADRYAIVANDVRKAIGEAKDDDTADILTAASRDLDKFLWFIESNIE</sequence>
<gene>
    <name evidence="1" type="primary">dps</name>
    <name type="ordered locus">E2348C_0764</name>
</gene>
<feature type="chain" id="PRO_1000184931" description="DNA protection during starvation protein">
    <location>
        <begin position="1"/>
        <end position="167"/>
    </location>
</feature>
<feature type="binding site" evidence="1">
    <location>
        <position position="51"/>
    </location>
    <ligand>
        <name>Fe cation</name>
        <dbReference type="ChEBI" id="CHEBI:24875"/>
        <label>1</label>
        <note>ligand shared between two neighboring subunits</note>
    </ligand>
</feature>
<feature type="binding site" description="in other chain" evidence="1">
    <location>
        <position position="78"/>
    </location>
    <ligand>
        <name>Fe cation</name>
        <dbReference type="ChEBI" id="CHEBI:24875"/>
        <label>1</label>
        <note>ligand shared between two neighboring subunits</note>
    </ligand>
</feature>
<feature type="binding site" description="in other chain" evidence="1">
    <location>
        <position position="82"/>
    </location>
    <ligand>
        <name>Fe cation</name>
        <dbReference type="ChEBI" id="CHEBI:24875"/>
        <label>1</label>
        <note>ligand shared between two neighboring subunits</note>
    </ligand>
</feature>
<feature type="binding site" evidence="1">
    <location>
        <position position="82"/>
    </location>
    <ligand>
        <name>Fe cation</name>
        <dbReference type="ChEBI" id="CHEBI:24875"/>
        <label>2</label>
    </ligand>
</feature>
<protein>
    <recommendedName>
        <fullName evidence="1">DNA protection during starvation protein</fullName>
        <ecNumber evidence="1">1.16.-.-</ecNumber>
    </recommendedName>
</protein>
<name>DPS_ECO27</name>